<keyword id="KW-1185">Reference proteome</keyword>
<reference key="1">
    <citation type="journal article" date="2009" name="PLoS Genet.">
        <title>Organised genome dynamics in the Escherichia coli species results in highly diverse adaptive paths.</title>
        <authorList>
            <person name="Touchon M."/>
            <person name="Hoede C."/>
            <person name="Tenaillon O."/>
            <person name="Barbe V."/>
            <person name="Baeriswyl S."/>
            <person name="Bidet P."/>
            <person name="Bingen E."/>
            <person name="Bonacorsi S."/>
            <person name="Bouchier C."/>
            <person name="Bouvet O."/>
            <person name="Calteau A."/>
            <person name="Chiapello H."/>
            <person name="Clermont O."/>
            <person name="Cruveiller S."/>
            <person name="Danchin A."/>
            <person name="Diard M."/>
            <person name="Dossat C."/>
            <person name="Karoui M.E."/>
            <person name="Frapy E."/>
            <person name="Garry L."/>
            <person name="Ghigo J.M."/>
            <person name="Gilles A.M."/>
            <person name="Johnson J."/>
            <person name="Le Bouguenec C."/>
            <person name="Lescat M."/>
            <person name="Mangenot S."/>
            <person name="Martinez-Jehanne V."/>
            <person name="Matic I."/>
            <person name="Nassif X."/>
            <person name="Oztas S."/>
            <person name="Petit M.A."/>
            <person name="Pichon C."/>
            <person name="Rouy Z."/>
            <person name="Ruf C.S."/>
            <person name="Schneider D."/>
            <person name="Tourret J."/>
            <person name="Vacherie B."/>
            <person name="Vallenet D."/>
            <person name="Medigue C."/>
            <person name="Rocha E.P.C."/>
            <person name="Denamur E."/>
        </authorList>
    </citation>
    <scope>NUCLEOTIDE SEQUENCE [LARGE SCALE GENOMIC DNA]</scope>
    <source>
        <strain>55989 / EAEC</strain>
    </source>
</reference>
<comment type="function">
    <text evidence="1">Component of the tagatose-1,6-bisphosphate aldolase KbaYZ that is required for full activity and stability of the Y subunit. Could have a chaperone-like function for the proper and stable folding of KbaY. When expressed alone, KbaZ does not show any aldolase activity.</text>
</comment>
<comment type="pathway">
    <text evidence="1">Carbohydrate metabolism; D-tagatose 6-phosphate degradation; D-glyceraldehyde 3-phosphate and glycerone phosphate from D-tagatose 6-phosphate: step 2/2.</text>
</comment>
<comment type="subunit">
    <text evidence="1">Forms a complex with KbaY.</text>
</comment>
<comment type="similarity">
    <text evidence="1">Belongs to the GatZ/KbaZ family. KbaZ subfamily.</text>
</comment>
<protein>
    <recommendedName>
        <fullName evidence="1">D-tagatose-1,6-bisphosphate aldolase subunit KbaZ</fullName>
    </recommendedName>
</protein>
<gene>
    <name evidence="1" type="primary">kbaZ</name>
    <name type="ordered locus">EC55989_3550</name>
</gene>
<accession>B7LH67</accession>
<name>KBAZ_ECO55</name>
<evidence type="ECO:0000255" key="1">
    <source>
        <dbReference type="HAMAP-Rule" id="MF_01295"/>
    </source>
</evidence>
<dbReference type="EMBL" id="CU928145">
    <property type="protein sequence ID" value="CAU99733.1"/>
    <property type="molecule type" value="Genomic_DNA"/>
</dbReference>
<dbReference type="RefSeq" id="WP_000681935.1">
    <property type="nucleotide sequence ID" value="NC_011748.1"/>
</dbReference>
<dbReference type="SMR" id="B7LH67"/>
<dbReference type="KEGG" id="eck:EC55989_3550"/>
<dbReference type="HOGENOM" id="CLU_053334_0_0_6"/>
<dbReference type="UniPathway" id="UPA00704">
    <property type="reaction ID" value="UER00716"/>
</dbReference>
<dbReference type="Proteomes" id="UP000000746">
    <property type="component" value="Chromosome"/>
</dbReference>
<dbReference type="GO" id="GO:0005886">
    <property type="term" value="C:plasma membrane"/>
    <property type="evidence" value="ECO:0007669"/>
    <property type="project" value="TreeGrafter"/>
</dbReference>
<dbReference type="GO" id="GO:0005975">
    <property type="term" value="P:carbohydrate metabolic process"/>
    <property type="evidence" value="ECO:0007669"/>
    <property type="project" value="InterPro"/>
</dbReference>
<dbReference type="GO" id="GO:2001059">
    <property type="term" value="P:D-tagatose 6-phosphate catabolic process"/>
    <property type="evidence" value="ECO:0007669"/>
    <property type="project" value="UniProtKB-UniRule"/>
</dbReference>
<dbReference type="GO" id="GO:0009401">
    <property type="term" value="P:phosphoenolpyruvate-dependent sugar phosphotransferase system"/>
    <property type="evidence" value="ECO:0007669"/>
    <property type="project" value="TreeGrafter"/>
</dbReference>
<dbReference type="FunFam" id="3.20.20.70:FF:000141">
    <property type="entry name" value="D-tagatose-1,6-bisphosphate aldolase subunit GatZ"/>
    <property type="match status" value="1"/>
</dbReference>
<dbReference type="Gene3D" id="3.20.20.70">
    <property type="entry name" value="Aldolase class I"/>
    <property type="match status" value="1"/>
</dbReference>
<dbReference type="Gene3D" id="1.10.400.20">
    <property type="entry name" value="putative tagatose 6-phosphate kinase domain like"/>
    <property type="match status" value="1"/>
</dbReference>
<dbReference type="HAMAP" id="MF_01295">
    <property type="entry name" value="Tagatose_aldol_KbaZ"/>
    <property type="match status" value="1"/>
</dbReference>
<dbReference type="InterPro" id="IPR013785">
    <property type="entry name" value="Aldolase_TIM"/>
</dbReference>
<dbReference type="InterPro" id="IPR012062">
    <property type="entry name" value="GatZ/KbaZ-like"/>
</dbReference>
<dbReference type="InterPro" id="IPR050303">
    <property type="entry name" value="GatZ_KbaZ_carbometab"/>
</dbReference>
<dbReference type="InterPro" id="IPR023435">
    <property type="entry name" value="TagBP_ald_KbaZ"/>
</dbReference>
<dbReference type="NCBIfam" id="TIGR02810">
    <property type="entry name" value="agaZ_gatZ"/>
    <property type="match status" value="1"/>
</dbReference>
<dbReference type="NCBIfam" id="NF012002">
    <property type="entry name" value="PRK15458.1"/>
    <property type="match status" value="1"/>
</dbReference>
<dbReference type="PANTHER" id="PTHR32502:SF2">
    <property type="entry name" value="D-TAGATOSE-1,6-BISPHOSPHATE ALDOLASE SUBUNIT KBAZ"/>
    <property type="match status" value="1"/>
</dbReference>
<dbReference type="PANTHER" id="PTHR32502">
    <property type="entry name" value="N-ACETYLGALACTOSAMINE PERMEASE II COMPONENT-RELATED"/>
    <property type="match status" value="1"/>
</dbReference>
<dbReference type="Pfam" id="PF08013">
    <property type="entry name" value="GatZ_KbaZ-like"/>
    <property type="match status" value="1"/>
</dbReference>
<dbReference type="PIRSF" id="PIRSF009264">
    <property type="entry name" value="TagBP_ald_AgaZ"/>
    <property type="match status" value="1"/>
</dbReference>
<dbReference type="SUPFAM" id="SSF51569">
    <property type="entry name" value="Aldolase"/>
    <property type="match status" value="1"/>
</dbReference>
<proteinExistence type="inferred from homology"/>
<organism>
    <name type="scientific">Escherichia coli (strain 55989 / EAEC)</name>
    <dbReference type="NCBI Taxonomy" id="585055"/>
    <lineage>
        <taxon>Bacteria</taxon>
        <taxon>Pseudomonadati</taxon>
        <taxon>Pseudomonadota</taxon>
        <taxon>Gammaproteobacteria</taxon>
        <taxon>Enterobacterales</taxon>
        <taxon>Enterobacteriaceae</taxon>
        <taxon>Escherichia</taxon>
    </lineage>
</organism>
<sequence>MKHLTEMVRQHKAGKTNGIYAVCSAHPLVLEAAIRYASANQTPLLIEATSNQVDQFGGYTGMTPADFRGFVCQLADSLNFPQDALILGGDHLGPNRWQNLPAAQAMANADDLIKSYVAAGFKKIHLDCSMSCQDDPIPLTDDIVAERAARLAKVAEETCREHFGEADLEYVIGTEVPVPGGAHETLSELAVTTPDAARATLEAHRHAFEKQGLNAIWPRIIALVVQPGVEFDHTNVIDYQPAKASALSQMVENYETLIFEAHSTDYQTPQSLRQLVIDHFAILKVGPALTFALREALFSLAAIEEELVPAKACSGLRQVQEDVMLDRPEYWQSHYHGDGNARRLARGYSYSDRVRYYWPDSQIDDAFAHLVRNLADSPIPLPLISQYLPLQYVKVRSGELQPTPRELIINHIQDILAQYHTACEGQ</sequence>
<feature type="chain" id="PRO_0000372524" description="D-tagatose-1,6-bisphosphate aldolase subunit KbaZ">
    <location>
        <begin position="1"/>
        <end position="426"/>
    </location>
</feature>